<organism>
    <name type="scientific">Vibrio cholerae serotype O1 (strain M66-2)</name>
    <dbReference type="NCBI Taxonomy" id="579112"/>
    <lineage>
        <taxon>Bacteria</taxon>
        <taxon>Pseudomonadati</taxon>
        <taxon>Pseudomonadota</taxon>
        <taxon>Gammaproteobacteria</taxon>
        <taxon>Vibrionales</taxon>
        <taxon>Vibrionaceae</taxon>
        <taxon>Vibrio</taxon>
    </lineage>
</organism>
<feature type="chain" id="PRO_1000149492" description="2,3-bisphosphoglycerate-independent phosphoglycerate mutase">
    <location>
        <begin position="1"/>
        <end position="510"/>
    </location>
</feature>
<feature type="active site" description="Phosphoserine intermediate" evidence="1">
    <location>
        <position position="63"/>
    </location>
</feature>
<feature type="binding site" evidence="1">
    <location>
        <position position="13"/>
    </location>
    <ligand>
        <name>Mn(2+)</name>
        <dbReference type="ChEBI" id="CHEBI:29035"/>
        <label>2</label>
    </ligand>
</feature>
<feature type="binding site" evidence="1">
    <location>
        <position position="63"/>
    </location>
    <ligand>
        <name>Mn(2+)</name>
        <dbReference type="ChEBI" id="CHEBI:29035"/>
        <label>2</label>
    </ligand>
</feature>
<feature type="binding site" evidence="1">
    <location>
        <position position="124"/>
    </location>
    <ligand>
        <name>substrate</name>
    </ligand>
</feature>
<feature type="binding site" evidence="1">
    <location>
        <begin position="154"/>
        <end position="155"/>
    </location>
    <ligand>
        <name>substrate</name>
    </ligand>
</feature>
<feature type="binding site" evidence="1">
    <location>
        <position position="186"/>
    </location>
    <ligand>
        <name>substrate</name>
    </ligand>
</feature>
<feature type="binding site" evidence="1">
    <location>
        <position position="192"/>
    </location>
    <ligand>
        <name>substrate</name>
    </ligand>
</feature>
<feature type="binding site" evidence="1">
    <location>
        <begin position="262"/>
        <end position="265"/>
    </location>
    <ligand>
        <name>substrate</name>
    </ligand>
</feature>
<feature type="binding site" evidence="1">
    <location>
        <position position="334"/>
    </location>
    <ligand>
        <name>substrate</name>
    </ligand>
</feature>
<feature type="binding site" evidence="1">
    <location>
        <position position="401"/>
    </location>
    <ligand>
        <name>Mn(2+)</name>
        <dbReference type="ChEBI" id="CHEBI:29035"/>
        <label>1</label>
    </ligand>
</feature>
<feature type="binding site" evidence="1">
    <location>
        <position position="405"/>
    </location>
    <ligand>
        <name>Mn(2+)</name>
        <dbReference type="ChEBI" id="CHEBI:29035"/>
        <label>1</label>
    </ligand>
</feature>
<feature type="binding site" evidence="1">
    <location>
        <position position="442"/>
    </location>
    <ligand>
        <name>Mn(2+)</name>
        <dbReference type="ChEBI" id="CHEBI:29035"/>
        <label>2</label>
    </ligand>
</feature>
<feature type="binding site" evidence="1">
    <location>
        <position position="443"/>
    </location>
    <ligand>
        <name>Mn(2+)</name>
        <dbReference type="ChEBI" id="CHEBI:29035"/>
        <label>2</label>
    </ligand>
</feature>
<feature type="binding site" evidence="1">
    <location>
        <position position="461"/>
    </location>
    <ligand>
        <name>Mn(2+)</name>
        <dbReference type="ChEBI" id="CHEBI:29035"/>
        <label>1</label>
    </ligand>
</feature>
<name>GPMI_VIBCM</name>
<protein>
    <recommendedName>
        <fullName evidence="1">2,3-bisphosphoglycerate-independent phosphoglycerate mutase</fullName>
        <shortName evidence="1">BPG-independent PGAM</shortName>
        <shortName evidence="1">Phosphoglyceromutase</shortName>
        <shortName evidence="1">iPGM</shortName>
        <ecNumber evidence="1">5.4.2.12</ecNumber>
    </recommendedName>
</protein>
<keyword id="KW-0324">Glycolysis</keyword>
<keyword id="KW-0413">Isomerase</keyword>
<keyword id="KW-0464">Manganese</keyword>
<keyword id="KW-0479">Metal-binding</keyword>
<sequence length="510" mass="55365">MSAKKPMALVILDGWGYREDNANNAINNARTPVMDSLMANNPHTLISASGMDVGLPDGQMGNSEVGHTNIGAGRIVYQDLTRITKAIMDGEFQHNKVLVAAIDKAVAAGKAVHLMGLMSPGGVHSHEDHIYAAVEMAAARGAEKIYLHCFLDGRDTPPRSAEASLKRFQDLFAKLGKGRIASIVGRYYAMDRDNNWDRVEKAYDLLTLAQGEFTYDSAVEALQAAYAREENDEFVKATEIRAAGQESAAMQDGDALLFMNYRADRARQITRTFVPDFAGFSRKAFPALDFVMLTQYAADIPLQCAFGPASLENTYGEWLSKAGKTQLRISETEKYAHVTFFFNGGVENEFPGEERQLVASPKVATYDLQPEMSSKELTDKLVAAIKSGKYDAIICNYPNGDMVGHTGVYEAAVKACEAVDECIGRVVEAIKEVDGQLLITADHGNAEMMIDPETGGVHTAHTSLPVPLIYVGNKAISLKEGGKLSDLAPTMLALSDLDIPADMSGQVLYS</sequence>
<reference key="1">
    <citation type="journal article" date="2008" name="PLoS ONE">
        <title>A recalibrated molecular clock and independent origins for the cholera pandemic clones.</title>
        <authorList>
            <person name="Feng L."/>
            <person name="Reeves P.R."/>
            <person name="Lan R."/>
            <person name="Ren Y."/>
            <person name="Gao C."/>
            <person name="Zhou Z."/>
            <person name="Ren Y."/>
            <person name="Cheng J."/>
            <person name="Wang W."/>
            <person name="Wang J."/>
            <person name="Qian W."/>
            <person name="Li D."/>
            <person name="Wang L."/>
        </authorList>
    </citation>
    <scope>NUCLEOTIDE SEQUENCE [LARGE SCALE GENOMIC DNA]</scope>
    <source>
        <strain>M66-2</strain>
    </source>
</reference>
<comment type="function">
    <text evidence="1">Catalyzes the interconversion of 2-phosphoglycerate and 3-phosphoglycerate.</text>
</comment>
<comment type="catalytic activity">
    <reaction evidence="1">
        <text>(2R)-2-phosphoglycerate = (2R)-3-phosphoglycerate</text>
        <dbReference type="Rhea" id="RHEA:15901"/>
        <dbReference type="ChEBI" id="CHEBI:58272"/>
        <dbReference type="ChEBI" id="CHEBI:58289"/>
        <dbReference type="EC" id="5.4.2.12"/>
    </reaction>
</comment>
<comment type="cofactor">
    <cofactor evidence="1">
        <name>Mn(2+)</name>
        <dbReference type="ChEBI" id="CHEBI:29035"/>
    </cofactor>
    <text evidence="1">Binds 2 manganese ions per subunit.</text>
</comment>
<comment type="pathway">
    <text evidence="1">Carbohydrate degradation; glycolysis; pyruvate from D-glyceraldehyde 3-phosphate: step 3/5.</text>
</comment>
<comment type="subunit">
    <text evidence="1">Monomer.</text>
</comment>
<comment type="similarity">
    <text evidence="1">Belongs to the BPG-independent phosphoglycerate mutase family.</text>
</comment>
<evidence type="ECO:0000255" key="1">
    <source>
        <dbReference type="HAMAP-Rule" id="MF_01038"/>
    </source>
</evidence>
<gene>
    <name evidence="1" type="primary">gpmI</name>
    <name type="ordered locus">VCM66_0320</name>
</gene>
<accession>C3LR68</accession>
<proteinExistence type="inferred from homology"/>
<dbReference type="EC" id="5.4.2.12" evidence="1"/>
<dbReference type="EMBL" id="CP001233">
    <property type="protein sequence ID" value="ACP04648.1"/>
    <property type="molecule type" value="Genomic_DNA"/>
</dbReference>
<dbReference type="SMR" id="C3LR68"/>
<dbReference type="KEGG" id="vcm:VCM66_0320"/>
<dbReference type="HOGENOM" id="CLU_026099_2_0_6"/>
<dbReference type="UniPathway" id="UPA00109">
    <property type="reaction ID" value="UER00186"/>
</dbReference>
<dbReference type="Proteomes" id="UP000001217">
    <property type="component" value="Chromosome I"/>
</dbReference>
<dbReference type="GO" id="GO:0005829">
    <property type="term" value="C:cytosol"/>
    <property type="evidence" value="ECO:0007669"/>
    <property type="project" value="TreeGrafter"/>
</dbReference>
<dbReference type="GO" id="GO:0030145">
    <property type="term" value="F:manganese ion binding"/>
    <property type="evidence" value="ECO:0007669"/>
    <property type="project" value="UniProtKB-UniRule"/>
</dbReference>
<dbReference type="GO" id="GO:0004619">
    <property type="term" value="F:phosphoglycerate mutase activity"/>
    <property type="evidence" value="ECO:0007669"/>
    <property type="project" value="UniProtKB-EC"/>
</dbReference>
<dbReference type="GO" id="GO:0006007">
    <property type="term" value="P:glucose catabolic process"/>
    <property type="evidence" value="ECO:0007669"/>
    <property type="project" value="InterPro"/>
</dbReference>
<dbReference type="GO" id="GO:0006096">
    <property type="term" value="P:glycolytic process"/>
    <property type="evidence" value="ECO:0007669"/>
    <property type="project" value="UniProtKB-UniRule"/>
</dbReference>
<dbReference type="CDD" id="cd16010">
    <property type="entry name" value="iPGM"/>
    <property type="match status" value="1"/>
</dbReference>
<dbReference type="FunFam" id="3.40.1450.10:FF:000001">
    <property type="entry name" value="2,3-bisphosphoglycerate-independent phosphoglycerate mutase"/>
    <property type="match status" value="1"/>
</dbReference>
<dbReference type="FunFam" id="3.40.720.10:FF:000001">
    <property type="entry name" value="2,3-bisphosphoglycerate-independent phosphoglycerate mutase"/>
    <property type="match status" value="1"/>
</dbReference>
<dbReference type="Gene3D" id="3.40.720.10">
    <property type="entry name" value="Alkaline Phosphatase, subunit A"/>
    <property type="match status" value="1"/>
</dbReference>
<dbReference type="Gene3D" id="3.40.1450.10">
    <property type="entry name" value="BPG-independent phosphoglycerate mutase, domain B"/>
    <property type="match status" value="1"/>
</dbReference>
<dbReference type="HAMAP" id="MF_01038">
    <property type="entry name" value="GpmI"/>
    <property type="match status" value="1"/>
</dbReference>
<dbReference type="InterPro" id="IPR017850">
    <property type="entry name" value="Alkaline_phosphatase_core_sf"/>
</dbReference>
<dbReference type="InterPro" id="IPR011258">
    <property type="entry name" value="BPG-indep_PGM_N"/>
</dbReference>
<dbReference type="InterPro" id="IPR006124">
    <property type="entry name" value="Metalloenzyme"/>
</dbReference>
<dbReference type="InterPro" id="IPR036646">
    <property type="entry name" value="PGAM_B_sf"/>
</dbReference>
<dbReference type="InterPro" id="IPR005995">
    <property type="entry name" value="Pgm_bpd_ind"/>
</dbReference>
<dbReference type="NCBIfam" id="TIGR01307">
    <property type="entry name" value="pgm_bpd_ind"/>
    <property type="match status" value="1"/>
</dbReference>
<dbReference type="NCBIfam" id="NF003897">
    <property type="entry name" value="PRK05434.1-5"/>
    <property type="match status" value="1"/>
</dbReference>
<dbReference type="PANTHER" id="PTHR31637">
    <property type="entry name" value="2,3-BISPHOSPHOGLYCERATE-INDEPENDENT PHOSPHOGLYCERATE MUTASE"/>
    <property type="match status" value="1"/>
</dbReference>
<dbReference type="PANTHER" id="PTHR31637:SF0">
    <property type="entry name" value="2,3-BISPHOSPHOGLYCERATE-INDEPENDENT PHOSPHOGLYCERATE MUTASE"/>
    <property type="match status" value="1"/>
</dbReference>
<dbReference type="Pfam" id="PF06415">
    <property type="entry name" value="iPGM_N"/>
    <property type="match status" value="1"/>
</dbReference>
<dbReference type="Pfam" id="PF01676">
    <property type="entry name" value="Metalloenzyme"/>
    <property type="match status" value="1"/>
</dbReference>
<dbReference type="PIRSF" id="PIRSF001492">
    <property type="entry name" value="IPGAM"/>
    <property type="match status" value="1"/>
</dbReference>
<dbReference type="SUPFAM" id="SSF64158">
    <property type="entry name" value="2,3-Bisphosphoglycerate-independent phosphoglycerate mutase, substrate-binding domain"/>
    <property type="match status" value="1"/>
</dbReference>
<dbReference type="SUPFAM" id="SSF53649">
    <property type="entry name" value="Alkaline phosphatase-like"/>
    <property type="match status" value="1"/>
</dbReference>